<comment type="function">
    <text evidence="2">Nuclease that specifically degrades the RNA of RNA-DNA hybrids; seems to act exonucleolytically on RNA/DNA hybrids. Endonucleolytically removes RNA primers from the Okazaki fragments of lagging strand synthesis on its own. Complements the temperature-sensitive phenotype of an E.coli double rnhA/rnhB (RNase H) disruption mutant.</text>
</comment>
<comment type="catalytic activity">
    <reaction evidence="1 2">
        <text>Endonucleolytic cleavage to 5'-phosphomonoester.</text>
        <dbReference type="EC" id="3.1.26.4"/>
    </reaction>
</comment>
<comment type="cofactor">
    <cofactor evidence="2 3">
        <name>Mn(2+)</name>
        <dbReference type="ChEBI" id="CHEBI:29035"/>
    </cofactor>
    <cofactor evidence="2 3">
        <name>Mg(2+)</name>
        <dbReference type="ChEBI" id="CHEBI:18420"/>
    </cofactor>
    <cofactor evidence="2 3">
        <name>Co(2+)</name>
        <dbReference type="ChEBI" id="CHEBI:48828"/>
    </cofactor>
    <cofactor evidence="2 3">
        <name>Ni(2+)</name>
        <dbReference type="ChEBI" id="CHEBI:49786"/>
    </cofactor>
    <text evidence="2 3">Divalent cations; Mn(2+) and Mg(2+) are preferred over Co(2+) or Ni(2+). Divalent cations are required for folding and substrate-binding, while divalent cations and NaCl are required for maximal protein stability.</text>
</comment>
<comment type="subcellular location">
    <subcellularLocation>
        <location evidence="4">Cytoplasm</location>
    </subcellularLocation>
</comment>
<comment type="similarity">
    <text evidence="4">Belongs to the RNase H family.</text>
</comment>
<proteinExistence type="evidence at protein level"/>
<accession>Q9HSF6</accession>
<name>RNH_HALSA</name>
<keyword id="KW-0002">3D-structure</keyword>
<keyword id="KW-0963">Cytoplasm</keyword>
<keyword id="KW-0238">DNA-binding</keyword>
<keyword id="KW-0255">Endonuclease</keyword>
<keyword id="KW-0269">Exonuclease</keyword>
<keyword id="KW-0378">Hydrolase</keyword>
<keyword id="KW-0460">Magnesium</keyword>
<keyword id="KW-0464">Manganese</keyword>
<keyword id="KW-0479">Metal-binding</keyword>
<keyword id="KW-0540">Nuclease</keyword>
<keyword id="KW-1185">Reference proteome</keyword>
<keyword id="KW-0694">RNA-binding</keyword>
<sequence>MPVVECDIQTARAALADAGASFSDGNSEHELWHADLGDAHAVAYADKLVVQGGSPTDITAVVQPDRGGRVHAYFDGASRGNPGPAAVGWVLVSGDGGIVAEGGDTIGRATNNQAEYDALIAALEAAADFGFDDIELRGDSQLVEKQLTGAWDTNDPDLRRKRVRARELLTGFDDWSITHVPRATNERADALANEALDDA</sequence>
<organism>
    <name type="scientific">Halobacterium salinarum (strain ATCC 700922 / JCM 11081 / NRC-1)</name>
    <name type="common">Halobacterium halobium</name>
    <dbReference type="NCBI Taxonomy" id="64091"/>
    <lineage>
        <taxon>Archaea</taxon>
        <taxon>Methanobacteriati</taxon>
        <taxon>Methanobacteriota</taxon>
        <taxon>Stenosarchaea group</taxon>
        <taxon>Halobacteria</taxon>
        <taxon>Halobacteriales</taxon>
        <taxon>Halobacteriaceae</taxon>
        <taxon>Halobacterium</taxon>
        <taxon>Halobacterium salinarum NRC-34001</taxon>
    </lineage>
</organism>
<reference key="1">
    <citation type="journal article" date="2000" name="Proc. Natl. Acad. Sci. U.S.A.">
        <title>Genome sequence of Halobacterium species NRC-1.</title>
        <authorList>
            <person name="Ng W.V."/>
            <person name="Kennedy S.P."/>
            <person name="Mahairas G.G."/>
            <person name="Berquist B."/>
            <person name="Pan M."/>
            <person name="Shukla H.D."/>
            <person name="Lasky S.R."/>
            <person name="Baliga N.S."/>
            <person name="Thorsson V."/>
            <person name="Sbrogna J."/>
            <person name="Swartzell S."/>
            <person name="Weir D."/>
            <person name="Hall J."/>
            <person name="Dahl T.A."/>
            <person name="Welti R."/>
            <person name="Goo Y.A."/>
            <person name="Leithauser B."/>
            <person name="Keller K."/>
            <person name="Cruz R."/>
            <person name="Danson M.J."/>
            <person name="Hough D.W."/>
            <person name="Maddocks D.G."/>
            <person name="Jablonski P.E."/>
            <person name="Krebs M.P."/>
            <person name="Angevine C.M."/>
            <person name="Dale H."/>
            <person name="Isenbarger T.A."/>
            <person name="Peck R.F."/>
            <person name="Pohlschroder M."/>
            <person name="Spudich J.L."/>
            <person name="Jung K.-H."/>
            <person name="Alam M."/>
            <person name="Freitas T."/>
            <person name="Hou S."/>
            <person name="Daniels C.J."/>
            <person name="Dennis P.P."/>
            <person name="Omer A.D."/>
            <person name="Ebhardt H."/>
            <person name="Lowe T.M."/>
            <person name="Liang P."/>
            <person name="Riley M."/>
            <person name="Hood L."/>
            <person name="DasSarma S."/>
        </authorList>
    </citation>
    <scope>NUCLEOTIDE SEQUENCE [LARGE SCALE GENOMIC DNA]</scope>
    <source>
        <strain>ATCC 700922 / JCM 11081 / NRC-1</strain>
    </source>
</reference>
<reference key="2">
    <citation type="journal article" date="2004" name="Biochem. J.">
        <title>Identification of the first archaeal Type 1 RNase H gene from Halobacterium sp. NRC-1: archaeal RNase HI can cleave an RNA-DNA junction.</title>
        <authorList>
            <person name="Ohtani N."/>
            <person name="Yanagawa H."/>
            <person name="Tomita M."/>
            <person name="Itaya M."/>
        </authorList>
    </citation>
    <scope>FUNCTION</scope>
    <scope>CATALYTIC ACTIVITY</scope>
    <scope>COFACTOR</scope>
    <scope>MUTAGENESIS OF HIS-29; HIS-33; HIS-40 AND HIS-179</scope>
    <source>
        <strain>ATCC 700922 / JCM 11081 / NRC-1</strain>
    </source>
</reference>
<reference key="3">
    <citation type="journal article" date="2012" name="FEBS Open Bio">
        <title>A dual role of divalent metal ions in catalysis and folding of RNase H1 from extreme halophilic archaeon Halobacterium sp. NRC-1.</title>
        <authorList>
            <person name="Tannous E."/>
            <person name="Yokoyama K."/>
            <person name="You D.J."/>
            <person name="Koga Y."/>
            <person name="Kanaya S."/>
        </authorList>
    </citation>
    <scope>COFACTOR</scope>
    <scope>NUCLEIC ACID-BINDING</scope>
    <source>
        <strain>ATCC 700922 / JCM 11081 / NRC-1</strain>
    </source>
</reference>
<dbReference type="EC" id="3.1.26.4"/>
<dbReference type="EMBL" id="AE004437">
    <property type="protein sequence ID" value="AAG18851.1"/>
    <property type="molecule type" value="Genomic_DNA"/>
</dbReference>
<dbReference type="PIR" id="G84185">
    <property type="entry name" value="G84185"/>
</dbReference>
<dbReference type="RefSeq" id="WP_010902145.1">
    <property type="nucleotide sequence ID" value="NC_002607.1"/>
</dbReference>
<dbReference type="PDB" id="4E19">
    <property type="method" value="X-ray"/>
    <property type="resolution" value="1.41 A"/>
    <property type="chains" value="A/B=1-199"/>
</dbReference>
<dbReference type="PDB" id="4NYN">
    <property type="method" value="X-ray"/>
    <property type="resolution" value="1.41 A"/>
    <property type="chains" value="A/B=1-199"/>
</dbReference>
<dbReference type="PDBsum" id="4E19"/>
<dbReference type="PDBsum" id="4NYN"/>
<dbReference type="SMR" id="Q9HSF6"/>
<dbReference type="STRING" id="64091.VNG_0255C"/>
<dbReference type="PaxDb" id="64091-VNG_0255C"/>
<dbReference type="DNASU" id="1447160"/>
<dbReference type="GeneID" id="68693217"/>
<dbReference type="KEGG" id="hal:VNG_0255C"/>
<dbReference type="PATRIC" id="fig|64091.14.peg.187"/>
<dbReference type="HOGENOM" id="CLU_1375506_0_0_2"/>
<dbReference type="InParanoid" id="Q9HSF6"/>
<dbReference type="OrthoDB" id="52651at2157"/>
<dbReference type="PhylomeDB" id="Q9HSF6"/>
<dbReference type="BRENDA" id="3.1.13.2">
    <property type="organism ID" value="2559"/>
</dbReference>
<dbReference type="BRENDA" id="3.1.26.4">
    <property type="organism ID" value="2552"/>
</dbReference>
<dbReference type="EvolutionaryTrace" id="Q9HSF6"/>
<dbReference type="Proteomes" id="UP000000554">
    <property type="component" value="Chromosome"/>
</dbReference>
<dbReference type="GO" id="GO:0005737">
    <property type="term" value="C:cytoplasm"/>
    <property type="evidence" value="ECO:0007669"/>
    <property type="project" value="UniProtKB-SubCell"/>
</dbReference>
<dbReference type="GO" id="GO:0003677">
    <property type="term" value="F:DNA binding"/>
    <property type="evidence" value="ECO:0007669"/>
    <property type="project" value="UniProtKB-KW"/>
</dbReference>
<dbReference type="GO" id="GO:0004527">
    <property type="term" value="F:exonuclease activity"/>
    <property type="evidence" value="ECO:0007669"/>
    <property type="project" value="UniProtKB-KW"/>
</dbReference>
<dbReference type="GO" id="GO:0046872">
    <property type="term" value="F:metal ion binding"/>
    <property type="evidence" value="ECO:0007669"/>
    <property type="project" value="UniProtKB-KW"/>
</dbReference>
<dbReference type="GO" id="GO:0003723">
    <property type="term" value="F:RNA binding"/>
    <property type="evidence" value="ECO:0007669"/>
    <property type="project" value="UniProtKB-KW"/>
</dbReference>
<dbReference type="GO" id="GO:0004523">
    <property type="term" value="F:RNA-DNA hybrid ribonuclease activity"/>
    <property type="evidence" value="ECO:0007669"/>
    <property type="project" value="UniProtKB-EC"/>
</dbReference>
<dbReference type="CDD" id="cd09279">
    <property type="entry name" value="RNase_HI_like"/>
    <property type="match status" value="1"/>
</dbReference>
<dbReference type="Gene3D" id="3.30.420.10">
    <property type="entry name" value="Ribonuclease H-like superfamily/Ribonuclease H"/>
    <property type="match status" value="1"/>
</dbReference>
<dbReference type="InterPro" id="IPR012337">
    <property type="entry name" value="RNaseH-like_sf"/>
</dbReference>
<dbReference type="InterPro" id="IPR002156">
    <property type="entry name" value="RNaseH_domain"/>
</dbReference>
<dbReference type="InterPro" id="IPR036397">
    <property type="entry name" value="RNaseH_sf"/>
</dbReference>
<dbReference type="InterPro" id="IPR049863">
    <property type="entry name" value="RnhA-like_halobact"/>
</dbReference>
<dbReference type="NCBIfam" id="NF041306">
    <property type="entry name" value="RnaseHI_Halo"/>
    <property type="match status" value="1"/>
</dbReference>
<dbReference type="PANTHER" id="PTHR46387">
    <property type="entry name" value="POLYNUCLEOTIDYL TRANSFERASE, RIBONUCLEASE H-LIKE SUPERFAMILY PROTEIN"/>
    <property type="match status" value="1"/>
</dbReference>
<dbReference type="PANTHER" id="PTHR46387:SF2">
    <property type="entry name" value="RIBONUCLEASE HI"/>
    <property type="match status" value="1"/>
</dbReference>
<dbReference type="Pfam" id="PF13456">
    <property type="entry name" value="RVT_3"/>
    <property type="match status" value="1"/>
</dbReference>
<dbReference type="SUPFAM" id="SSF53098">
    <property type="entry name" value="Ribonuclease H-like"/>
    <property type="match status" value="1"/>
</dbReference>
<dbReference type="PROSITE" id="PS50879">
    <property type="entry name" value="RNASE_H_1"/>
    <property type="match status" value="1"/>
</dbReference>
<gene>
    <name type="primary">rnhA</name>
    <name type="ordered locus">VNG_0255C</name>
</gene>
<evidence type="ECO:0000255" key="1">
    <source>
        <dbReference type="PROSITE-ProRule" id="PRU00408"/>
    </source>
</evidence>
<evidence type="ECO:0000269" key="2">
    <source>
    </source>
</evidence>
<evidence type="ECO:0000269" key="3">
    <source ref="3"/>
</evidence>
<evidence type="ECO:0000305" key="4"/>
<evidence type="ECO:0007829" key="5">
    <source>
        <dbReference type="PDB" id="4E19"/>
    </source>
</evidence>
<feature type="chain" id="PRO_0000420869" description="Ribonuclease HI">
    <location>
        <begin position="1"/>
        <end position="199"/>
    </location>
</feature>
<feature type="domain" description="RNase H type-1" evidence="1">
    <location>
        <begin position="66"/>
        <end position="197"/>
    </location>
</feature>
<feature type="region of interest" description="Not required for RNase H activity">
    <location>
        <begin position="1"/>
        <end position="68"/>
    </location>
</feature>
<feature type="region of interest" description="As active as intact RNase H">
    <location>
        <begin position="69"/>
        <end position="199"/>
    </location>
</feature>
<feature type="binding site" evidence="1">
    <location>
        <position position="75"/>
    </location>
    <ligand>
        <name>Mg(2+)</name>
        <dbReference type="ChEBI" id="CHEBI:18420"/>
        <label>1</label>
    </ligand>
</feature>
<feature type="binding site" evidence="1">
    <location>
        <position position="75"/>
    </location>
    <ligand>
        <name>Mg(2+)</name>
        <dbReference type="ChEBI" id="CHEBI:18420"/>
        <label>2</label>
    </ligand>
</feature>
<feature type="binding site" evidence="1">
    <location>
        <position position="75"/>
    </location>
    <ligand>
        <name>Mn(2+)</name>
        <dbReference type="ChEBI" id="CHEBI:29035"/>
        <label>1</label>
    </ligand>
</feature>
<feature type="binding site" evidence="1">
    <location>
        <position position="75"/>
    </location>
    <ligand>
        <name>Mn(2+)</name>
        <dbReference type="ChEBI" id="CHEBI:29035"/>
        <label>2</label>
    </ligand>
</feature>
<feature type="binding site" evidence="1">
    <location>
        <position position="115"/>
    </location>
    <ligand>
        <name>Mg(2+)</name>
        <dbReference type="ChEBI" id="CHEBI:18420"/>
        <label>1</label>
    </ligand>
</feature>
<feature type="binding site" evidence="1">
    <location>
        <position position="115"/>
    </location>
    <ligand>
        <name>Mn(2+)</name>
        <dbReference type="ChEBI" id="CHEBI:29035"/>
        <label>1</label>
    </ligand>
</feature>
<feature type="binding site" evidence="1">
    <location>
        <position position="139"/>
    </location>
    <ligand>
        <name>Mg(2+)</name>
        <dbReference type="ChEBI" id="CHEBI:18420"/>
        <label>1</label>
    </ligand>
</feature>
<feature type="binding site" evidence="1">
    <location>
        <position position="139"/>
    </location>
    <ligand>
        <name>Mn(2+)</name>
        <dbReference type="ChEBI" id="CHEBI:29035"/>
        <label>1</label>
    </ligand>
</feature>
<feature type="binding site" evidence="1">
    <location>
        <position position="189"/>
    </location>
    <ligand>
        <name>Mg(2+)</name>
        <dbReference type="ChEBI" id="CHEBI:18420"/>
        <label>2</label>
    </ligand>
</feature>
<feature type="binding site" evidence="1">
    <location>
        <position position="189"/>
    </location>
    <ligand>
        <name>Mn(2+)</name>
        <dbReference type="ChEBI" id="CHEBI:29035"/>
        <label>2</label>
    </ligand>
</feature>
<feature type="mutagenesis site" description="No loss of RNase H activity." evidence="2">
    <original>H</original>
    <variation>A</variation>
    <location>
        <position position="29"/>
    </location>
</feature>
<feature type="mutagenesis site" description="No loss of RNase H activity." evidence="2">
    <original>H</original>
    <variation>A</variation>
    <location>
        <position position="33"/>
    </location>
</feature>
<feature type="mutagenesis site" description="No loss of RNase H activity." evidence="2">
    <original>H</original>
    <variation>A</variation>
    <location>
        <position position="40"/>
    </location>
</feature>
<feature type="mutagenesis site" description="No loss of RNase H activity.">
    <original>H</original>
    <variation>A</variation>
    <location>
        <position position="71"/>
    </location>
</feature>
<feature type="mutagenesis site" description="No loss of RNase H activity." evidence="2">
    <original>H</original>
    <variation>A</variation>
    <variation>W</variation>
    <location>
        <position position="179"/>
    </location>
</feature>
<feature type="strand" evidence="5">
    <location>
        <begin position="69"/>
        <end position="80"/>
    </location>
</feature>
<feature type="strand" evidence="5">
    <location>
        <begin position="83"/>
        <end position="92"/>
    </location>
</feature>
<feature type="strand" evidence="5">
    <location>
        <begin position="98"/>
        <end position="109"/>
    </location>
</feature>
<feature type="helix" evidence="5">
    <location>
        <begin position="111"/>
        <end position="128"/>
    </location>
</feature>
<feature type="strand" evidence="5">
    <location>
        <begin position="132"/>
        <end position="139"/>
    </location>
</feature>
<feature type="helix" evidence="5">
    <location>
        <begin position="141"/>
        <end position="147"/>
    </location>
</feature>
<feature type="helix" evidence="5">
    <location>
        <begin position="156"/>
        <end position="170"/>
    </location>
</feature>
<feature type="strand" evidence="5">
    <location>
        <begin position="172"/>
        <end position="179"/>
    </location>
</feature>
<feature type="turn" evidence="5">
    <location>
        <begin position="182"/>
        <end position="185"/>
    </location>
</feature>
<feature type="helix" evidence="5">
    <location>
        <begin position="186"/>
        <end position="197"/>
    </location>
</feature>
<protein>
    <recommendedName>
        <fullName>Ribonuclease HI</fullName>
        <shortName>Halo-RNase HI</shortName>
        <shortName>RNase HI</shortName>
        <ecNumber>3.1.26.4</ecNumber>
    </recommendedName>
</protein>